<keyword id="KW-0963">Cytoplasm</keyword>
<keyword id="KW-0413">Isomerase</keyword>
<keyword id="KW-0464">Manganese</keyword>
<keyword id="KW-0479">Metal-binding</keyword>
<keyword id="KW-0684">Rhamnose metabolism</keyword>
<dbReference type="EC" id="5.3.1.14" evidence="1"/>
<dbReference type="EMBL" id="CP000036">
    <property type="protein sequence ID" value="ABB68372.1"/>
    <property type="molecule type" value="Genomic_DNA"/>
</dbReference>
<dbReference type="RefSeq" id="WP_000211490.1">
    <property type="nucleotide sequence ID" value="NC_007613.1"/>
</dbReference>
<dbReference type="SMR" id="Q31U86"/>
<dbReference type="KEGG" id="sbo:SBO_3921"/>
<dbReference type="HOGENOM" id="CLU_052790_0_0_6"/>
<dbReference type="UniPathway" id="UPA00541">
    <property type="reaction ID" value="UER00601"/>
</dbReference>
<dbReference type="Proteomes" id="UP000007067">
    <property type="component" value="Chromosome"/>
</dbReference>
<dbReference type="GO" id="GO:0005737">
    <property type="term" value="C:cytoplasm"/>
    <property type="evidence" value="ECO:0007669"/>
    <property type="project" value="UniProtKB-SubCell"/>
</dbReference>
<dbReference type="GO" id="GO:0008740">
    <property type="term" value="F:L-rhamnose isomerase activity"/>
    <property type="evidence" value="ECO:0007669"/>
    <property type="project" value="UniProtKB-UniRule"/>
</dbReference>
<dbReference type="GO" id="GO:0030145">
    <property type="term" value="F:manganese ion binding"/>
    <property type="evidence" value="ECO:0007669"/>
    <property type="project" value="UniProtKB-UniRule"/>
</dbReference>
<dbReference type="GO" id="GO:0019324">
    <property type="term" value="P:L-lyxose metabolic process"/>
    <property type="evidence" value="ECO:0007669"/>
    <property type="project" value="TreeGrafter"/>
</dbReference>
<dbReference type="GO" id="GO:0019301">
    <property type="term" value="P:rhamnose catabolic process"/>
    <property type="evidence" value="ECO:0007669"/>
    <property type="project" value="UniProtKB-UniRule"/>
</dbReference>
<dbReference type="FunFam" id="3.20.20.150:FF:000006">
    <property type="entry name" value="L-rhamnose isomerase"/>
    <property type="match status" value="1"/>
</dbReference>
<dbReference type="Gene3D" id="3.20.20.150">
    <property type="entry name" value="Divalent-metal-dependent TIM barrel enzymes"/>
    <property type="match status" value="1"/>
</dbReference>
<dbReference type="HAMAP" id="MF_00541">
    <property type="entry name" value="RhaA"/>
    <property type="match status" value="1"/>
</dbReference>
<dbReference type="InterPro" id="IPR050337">
    <property type="entry name" value="L-rhamnose_isomerase"/>
</dbReference>
<dbReference type="InterPro" id="IPR009308">
    <property type="entry name" value="Rhamnose_isomerase"/>
</dbReference>
<dbReference type="InterPro" id="IPR036237">
    <property type="entry name" value="Xyl_isomerase-like_sf"/>
</dbReference>
<dbReference type="NCBIfam" id="NF002203">
    <property type="entry name" value="PRK01076.1"/>
    <property type="match status" value="1"/>
</dbReference>
<dbReference type="NCBIfam" id="TIGR01748">
    <property type="entry name" value="rhaA"/>
    <property type="match status" value="1"/>
</dbReference>
<dbReference type="PANTHER" id="PTHR30268">
    <property type="entry name" value="L-RHAMNOSE ISOMERASE"/>
    <property type="match status" value="1"/>
</dbReference>
<dbReference type="PANTHER" id="PTHR30268:SF0">
    <property type="entry name" value="L-RHAMNOSE ISOMERASE"/>
    <property type="match status" value="1"/>
</dbReference>
<dbReference type="Pfam" id="PF06134">
    <property type="entry name" value="RhaA"/>
    <property type="match status" value="1"/>
</dbReference>
<dbReference type="SUPFAM" id="SSF51658">
    <property type="entry name" value="Xylose isomerase-like"/>
    <property type="match status" value="1"/>
</dbReference>
<proteinExistence type="inferred from homology"/>
<evidence type="ECO:0000255" key="1">
    <source>
        <dbReference type="HAMAP-Rule" id="MF_00541"/>
    </source>
</evidence>
<sequence length="419" mass="47170">MTTQLEQAWELAKQRFAAVGIDVEEALRQLDRLPVSMHCWQGDDVSGFENPEGSLTGGIQATGNYPGKARNASELRADLEQAMRLIPGPKRLNLHAIYLESDTPVSRDQIKPEHFKNWGEWAKANQLGLDFNPSCFSHPLSADGFTLSHPDDSIRQFWIDHCKASRRVSAYFGEQLGTPSVMNIWIPDGMKDITVDRLAPRQRLLAALDEVISKKLNPAHHIDAVESKLFGIGAESYTVGSNEFYMGYATSRQTALCLDAGHFHPTEVISDKISAAMLYVPQLLLHVSRPVRWDCDHVVLLDDETQAIASEIVRHDLFDRVHIGLDFFDASINRIAAWVIGTRNMKKALLRALLEPTAELRKLEAAGDYTARLALLEEQKSLPWQAVWEMYCQRHDTPAGSEWLESVRAYEKEILSQRG</sequence>
<feature type="chain" id="PRO_1000017721" description="L-rhamnose isomerase">
    <location>
        <begin position="1"/>
        <end position="419"/>
    </location>
</feature>
<feature type="binding site" evidence="1">
    <location>
        <position position="262"/>
    </location>
    <ligand>
        <name>Mn(2+)</name>
        <dbReference type="ChEBI" id="CHEBI:29035"/>
    </ligand>
</feature>
<feature type="binding site" evidence="1">
    <location>
        <position position="294"/>
    </location>
    <ligand>
        <name>Mn(2+)</name>
        <dbReference type="ChEBI" id="CHEBI:29035"/>
    </ligand>
</feature>
<feature type="binding site" evidence="1">
    <location>
        <position position="296"/>
    </location>
    <ligand>
        <name>Mn(2+)</name>
        <dbReference type="ChEBI" id="CHEBI:29035"/>
    </ligand>
</feature>
<name>RHAA_SHIBS</name>
<comment type="function">
    <text evidence="1">Catalyzes the interconversion of L-rhamnose and L-rhamnulose.</text>
</comment>
<comment type="catalytic activity">
    <reaction evidence="1">
        <text>L-rhamnopyranose = L-rhamnulose</text>
        <dbReference type="Rhea" id="RHEA:23160"/>
        <dbReference type="ChEBI" id="CHEBI:17897"/>
        <dbReference type="ChEBI" id="CHEBI:62346"/>
        <dbReference type="EC" id="5.3.1.14"/>
    </reaction>
</comment>
<comment type="cofactor">
    <cofactor evidence="1">
        <name>Mn(2+)</name>
        <dbReference type="ChEBI" id="CHEBI:29035"/>
    </cofactor>
    <text evidence="1">Binds 1 Mn(2+) ion per subunit.</text>
</comment>
<comment type="pathway">
    <text evidence="1">Carbohydrate degradation; L-rhamnose degradation; glycerone phosphate from L-rhamnose: step 1/3.</text>
</comment>
<comment type="subunit">
    <text evidence="1">Homotetramer.</text>
</comment>
<comment type="subcellular location">
    <subcellularLocation>
        <location evidence="1">Cytoplasm</location>
    </subcellularLocation>
</comment>
<comment type="similarity">
    <text evidence="1">Belongs to the rhamnose isomerase family.</text>
</comment>
<protein>
    <recommendedName>
        <fullName evidence="1">L-rhamnose isomerase</fullName>
        <ecNumber evidence="1">5.3.1.14</ecNumber>
    </recommendedName>
</protein>
<reference key="1">
    <citation type="journal article" date="2005" name="Nucleic Acids Res.">
        <title>Genome dynamics and diversity of Shigella species, the etiologic agents of bacillary dysentery.</title>
        <authorList>
            <person name="Yang F."/>
            <person name="Yang J."/>
            <person name="Zhang X."/>
            <person name="Chen L."/>
            <person name="Jiang Y."/>
            <person name="Yan Y."/>
            <person name="Tang X."/>
            <person name="Wang J."/>
            <person name="Xiong Z."/>
            <person name="Dong J."/>
            <person name="Xue Y."/>
            <person name="Zhu Y."/>
            <person name="Xu X."/>
            <person name="Sun L."/>
            <person name="Chen S."/>
            <person name="Nie H."/>
            <person name="Peng J."/>
            <person name="Xu J."/>
            <person name="Wang Y."/>
            <person name="Yuan Z."/>
            <person name="Wen Y."/>
            <person name="Yao Z."/>
            <person name="Shen Y."/>
            <person name="Qiang B."/>
            <person name="Hou Y."/>
            <person name="Yu J."/>
            <person name="Jin Q."/>
        </authorList>
    </citation>
    <scope>NUCLEOTIDE SEQUENCE [LARGE SCALE GENOMIC DNA]</scope>
    <source>
        <strain>Sb227</strain>
    </source>
</reference>
<organism>
    <name type="scientific">Shigella boydii serotype 4 (strain Sb227)</name>
    <dbReference type="NCBI Taxonomy" id="300268"/>
    <lineage>
        <taxon>Bacteria</taxon>
        <taxon>Pseudomonadati</taxon>
        <taxon>Pseudomonadota</taxon>
        <taxon>Gammaproteobacteria</taxon>
        <taxon>Enterobacterales</taxon>
        <taxon>Enterobacteriaceae</taxon>
        <taxon>Shigella</taxon>
    </lineage>
</organism>
<gene>
    <name evidence="1" type="primary">rhaA</name>
    <name type="ordered locus">SBO_3921</name>
</gene>
<accession>Q31U86</accession>